<dbReference type="EC" id="7.1.1.1" evidence="4"/>
<dbReference type="EMBL" id="Z49204">
    <property type="protein sequence ID" value="CAA89065.1"/>
    <property type="molecule type" value="mRNA"/>
</dbReference>
<dbReference type="EMBL" id="AF257157">
    <property type="protein sequence ID" value="AAF72982.2"/>
    <property type="molecule type" value="Genomic_DNA"/>
</dbReference>
<dbReference type="EMBL" id="AF257137">
    <property type="protein sequence ID" value="AAF72982.2"/>
    <property type="status" value="JOINED"/>
    <property type="molecule type" value="Genomic_DNA"/>
</dbReference>
<dbReference type="EMBL" id="AF257138">
    <property type="protein sequence ID" value="AAF72982.2"/>
    <property type="status" value="JOINED"/>
    <property type="molecule type" value="Genomic_DNA"/>
</dbReference>
<dbReference type="EMBL" id="AF257139">
    <property type="protein sequence ID" value="AAF72982.2"/>
    <property type="status" value="JOINED"/>
    <property type="molecule type" value="Genomic_DNA"/>
</dbReference>
<dbReference type="EMBL" id="AF257140">
    <property type="protein sequence ID" value="AAF72982.2"/>
    <property type="status" value="JOINED"/>
    <property type="molecule type" value="Genomic_DNA"/>
</dbReference>
<dbReference type="EMBL" id="AF257141">
    <property type="protein sequence ID" value="AAF72982.2"/>
    <property type="status" value="JOINED"/>
    <property type="molecule type" value="Genomic_DNA"/>
</dbReference>
<dbReference type="EMBL" id="AF257142">
    <property type="protein sequence ID" value="AAF72982.2"/>
    <property type="status" value="JOINED"/>
    <property type="molecule type" value="Genomic_DNA"/>
</dbReference>
<dbReference type="EMBL" id="AF257143">
    <property type="protein sequence ID" value="AAF72982.2"/>
    <property type="status" value="JOINED"/>
    <property type="molecule type" value="Genomic_DNA"/>
</dbReference>
<dbReference type="EMBL" id="AF257144">
    <property type="protein sequence ID" value="AAF72982.2"/>
    <property type="status" value="JOINED"/>
    <property type="molecule type" value="Genomic_DNA"/>
</dbReference>
<dbReference type="EMBL" id="AF257145">
    <property type="protein sequence ID" value="AAF72982.2"/>
    <property type="status" value="JOINED"/>
    <property type="molecule type" value="Genomic_DNA"/>
</dbReference>
<dbReference type="EMBL" id="AF257146">
    <property type="protein sequence ID" value="AAF72982.2"/>
    <property type="status" value="JOINED"/>
    <property type="molecule type" value="Genomic_DNA"/>
</dbReference>
<dbReference type="EMBL" id="AF257147">
    <property type="protein sequence ID" value="AAF72982.2"/>
    <property type="status" value="JOINED"/>
    <property type="molecule type" value="Genomic_DNA"/>
</dbReference>
<dbReference type="EMBL" id="AF257148">
    <property type="protein sequence ID" value="AAF72982.2"/>
    <property type="status" value="JOINED"/>
    <property type="molecule type" value="Genomic_DNA"/>
</dbReference>
<dbReference type="EMBL" id="AF257149">
    <property type="protein sequence ID" value="AAF72982.2"/>
    <property type="status" value="JOINED"/>
    <property type="molecule type" value="Genomic_DNA"/>
</dbReference>
<dbReference type="EMBL" id="AF257150">
    <property type="protein sequence ID" value="AAF72982.2"/>
    <property type="status" value="JOINED"/>
    <property type="molecule type" value="Genomic_DNA"/>
</dbReference>
<dbReference type="EMBL" id="AF257151">
    <property type="protein sequence ID" value="AAF72982.2"/>
    <property type="status" value="JOINED"/>
    <property type="molecule type" value="Genomic_DNA"/>
</dbReference>
<dbReference type="EMBL" id="AF257152">
    <property type="protein sequence ID" value="AAF72982.2"/>
    <property type="status" value="JOINED"/>
    <property type="molecule type" value="Genomic_DNA"/>
</dbReference>
<dbReference type="EMBL" id="AF257153">
    <property type="protein sequence ID" value="AAF72982.2"/>
    <property type="status" value="JOINED"/>
    <property type="molecule type" value="Genomic_DNA"/>
</dbReference>
<dbReference type="EMBL" id="AF257154">
    <property type="protein sequence ID" value="AAF72982.2"/>
    <property type="status" value="JOINED"/>
    <property type="molecule type" value="Genomic_DNA"/>
</dbReference>
<dbReference type="EMBL" id="AF257155">
    <property type="protein sequence ID" value="AAF72982.2"/>
    <property type="status" value="JOINED"/>
    <property type="molecule type" value="Genomic_DNA"/>
</dbReference>
<dbReference type="EMBL" id="AF257156">
    <property type="protein sequence ID" value="AAF72982.2"/>
    <property type="status" value="JOINED"/>
    <property type="molecule type" value="Genomic_DNA"/>
</dbReference>
<dbReference type="PIR" id="S54876">
    <property type="entry name" value="S54876"/>
</dbReference>
<dbReference type="SMR" id="Q61941"/>
<dbReference type="FunCoup" id="Q61941">
    <property type="interactions" value="924"/>
</dbReference>
<dbReference type="IntAct" id="Q61941">
    <property type="interactions" value="4"/>
</dbReference>
<dbReference type="MINT" id="Q61941"/>
<dbReference type="STRING" id="10090.ENSMUSP00000096753"/>
<dbReference type="GlyGen" id="Q61941">
    <property type="glycosylation" value="2 sites, 1 O-linked glycan (1 site)"/>
</dbReference>
<dbReference type="iPTMnet" id="Q61941"/>
<dbReference type="PhosphoSitePlus" id="Q61941"/>
<dbReference type="SwissPalm" id="Q61941"/>
<dbReference type="jPOST" id="Q61941"/>
<dbReference type="PeptideAtlas" id="Q61941"/>
<dbReference type="ProteomicsDB" id="293697"/>
<dbReference type="Pumba" id="Q61941"/>
<dbReference type="AGR" id="MGI:109279"/>
<dbReference type="MGI" id="MGI:109279">
    <property type="gene designation" value="Nnt"/>
</dbReference>
<dbReference type="eggNOG" id="ENOG502QQ0A">
    <property type="taxonomic scope" value="Eukaryota"/>
</dbReference>
<dbReference type="InParanoid" id="Q61941"/>
<dbReference type="Reactome" id="R-MMU-71403">
    <property type="pathway name" value="Citric acid cycle (TCA cycle)"/>
</dbReference>
<dbReference type="CD-CODE" id="CE726F99">
    <property type="entry name" value="Postsynaptic density"/>
</dbReference>
<dbReference type="ChiTaRS" id="Nnt">
    <property type="organism name" value="mouse"/>
</dbReference>
<dbReference type="PRO" id="PR:Q61941"/>
<dbReference type="Proteomes" id="UP000000589">
    <property type="component" value="Unplaced"/>
</dbReference>
<dbReference type="RNAct" id="Q61941">
    <property type="molecule type" value="protein"/>
</dbReference>
<dbReference type="GO" id="GO:0005743">
    <property type="term" value="C:mitochondrial inner membrane"/>
    <property type="evidence" value="ECO:0007005"/>
    <property type="project" value="MGI"/>
</dbReference>
<dbReference type="GO" id="GO:0005739">
    <property type="term" value="C:mitochondrion"/>
    <property type="evidence" value="ECO:0007005"/>
    <property type="project" value="MGI"/>
</dbReference>
<dbReference type="GO" id="GO:0016491">
    <property type="term" value="F:oxidoreductase activity"/>
    <property type="evidence" value="ECO:0007669"/>
    <property type="project" value="InterPro"/>
</dbReference>
<dbReference type="GO" id="GO:0008750">
    <property type="term" value="F:proton-translocating NAD(P)+ transhydrogenase activity"/>
    <property type="evidence" value="ECO:0007669"/>
    <property type="project" value="UniProtKB-EC"/>
</dbReference>
<dbReference type="GO" id="GO:0072593">
    <property type="term" value="P:reactive oxygen species metabolic process"/>
    <property type="evidence" value="ECO:0000250"/>
    <property type="project" value="UniProtKB"/>
</dbReference>
<dbReference type="CDD" id="cd05304">
    <property type="entry name" value="Rubrum_tdh"/>
    <property type="match status" value="1"/>
</dbReference>
<dbReference type="FunFam" id="3.40.50.720:FF:000028">
    <property type="entry name" value="NAD(P) transhydrogenase subunit alpha"/>
    <property type="match status" value="1"/>
</dbReference>
<dbReference type="FunFam" id="3.40.50.1220:FF:000002">
    <property type="entry name" value="NAD(P) transhydrogenase subunit beta"/>
    <property type="match status" value="1"/>
</dbReference>
<dbReference type="Gene3D" id="3.40.50.720">
    <property type="entry name" value="NAD(P)-binding Rossmann-like Domain"/>
    <property type="match status" value="2"/>
</dbReference>
<dbReference type="Gene3D" id="3.40.50.1220">
    <property type="entry name" value="TPP-binding domain"/>
    <property type="match status" value="1"/>
</dbReference>
<dbReference type="InterPro" id="IPR008143">
    <property type="entry name" value="Ala_DH/PNT_CS2"/>
</dbReference>
<dbReference type="InterPro" id="IPR008142">
    <property type="entry name" value="AlaDH/PNT_CS1"/>
</dbReference>
<dbReference type="InterPro" id="IPR007886">
    <property type="entry name" value="AlaDH/PNT_N"/>
</dbReference>
<dbReference type="InterPro" id="IPR007698">
    <property type="entry name" value="AlaDH/PNT_NAD(H)-bd"/>
</dbReference>
<dbReference type="InterPro" id="IPR029035">
    <property type="entry name" value="DHS-like_NAD/FAD-binding_dom"/>
</dbReference>
<dbReference type="InterPro" id="IPR036291">
    <property type="entry name" value="NAD(P)-bd_dom_sf"/>
</dbReference>
<dbReference type="InterPro" id="IPR026255">
    <property type="entry name" value="NADP_transhyd_a"/>
</dbReference>
<dbReference type="InterPro" id="IPR024605">
    <property type="entry name" value="NADP_transhyd_a_C"/>
</dbReference>
<dbReference type="InterPro" id="IPR034300">
    <property type="entry name" value="PNTB-like"/>
</dbReference>
<dbReference type="NCBIfam" id="TIGR00561">
    <property type="entry name" value="pntA"/>
    <property type="match status" value="1"/>
</dbReference>
<dbReference type="NCBIfam" id="NF006942">
    <property type="entry name" value="PRK09424.1"/>
    <property type="match status" value="1"/>
</dbReference>
<dbReference type="PANTHER" id="PTHR10160">
    <property type="entry name" value="NAD(P) TRANSHYDROGENASE"/>
    <property type="match status" value="1"/>
</dbReference>
<dbReference type="PANTHER" id="PTHR10160:SF22">
    <property type="entry name" value="NAD(P) TRANSHYDROGENASE, MITOCHONDRIAL"/>
    <property type="match status" value="1"/>
</dbReference>
<dbReference type="Pfam" id="PF01262">
    <property type="entry name" value="AlaDh_PNT_C"/>
    <property type="match status" value="1"/>
</dbReference>
<dbReference type="Pfam" id="PF05222">
    <property type="entry name" value="AlaDh_PNT_N"/>
    <property type="match status" value="1"/>
</dbReference>
<dbReference type="Pfam" id="PF02233">
    <property type="entry name" value="PNTB"/>
    <property type="match status" value="1"/>
</dbReference>
<dbReference type="Pfam" id="PF12769">
    <property type="entry name" value="PNTB_4TM"/>
    <property type="match status" value="1"/>
</dbReference>
<dbReference type="SMART" id="SM01002">
    <property type="entry name" value="AlaDh_PNT_C"/>
    <property type="match status" value="1"/>
</dbReference>
<dbReference type="SMART" id="SM01003">
    <property type="entry name" value="AlaDh_PNT_N"/>
    <property type="match status" value="1"/>
</dbReference>
<dbReference type="SUPFAM" id="SSF52467">
    <property type="entry name" value="DHS-like NAD/FAD-binding domain"/>
    <property type="match status" value="1"/>
</dbReference>
<dbReference type="SUPFAM" id="SSF52283">
    <property type="entry name" value="Formate/glycerate dehydrogenase catalytic domain-like"/>
    <property type="match status" value="1"/>
</dbReference>
<dbReference type="SUPFAM" id="SSF51735">
    <property type="entry name" value="NAD(P)-binding Rossmann-fold domains"/>
    <property type="match status" value="1"/>
</dbReference>
<dbReference type="PROSITE" id="PS00836">
    <property type="entry name" value="ALADH_PNT_1"/>
    <property type="match status" value="1"/>
</dbReference>
<dbReference type="PROSITE" id="PS00837">
    <property type="entry name" value="ALADH_PNT_2"/>
    <property type="match status" value="1"/>
</dbReference>
<organism>
    <name type="scientific">Mus musculus</name>
    <name type="common">Mouse</name>
    <dbReference type="NCBI Taxonomy" id="10090"/>
    <lineage>
        <taxon>Eukaryota</taxon>
        <taxon>Metazoa</taxon>
        <taxon>Chordata</taxon>
        <taxon>Craniata</taxon>
        <taxon>Vertebrata</taxon>
        <taxon>Euteleostomi</taxon>
        <taxon>Mammalia</taxon>
        <taxon>Eutheria</taxon>
        <taxon>Euarchontoglires</taxon>
        <taxon>Glires</taxon>
        <taxon>Rodentia</taxon>
        <taxon>Myomorpha</taxon>
        <taxon>Muroidea</taxon>
        <taxon>Muridae</taxon>
        <taxon>Murinae</taxon>
        <taxon>Mus</taxon>
        <taxon>Mus</taxon>
    </lineage>
</organism>
<sequence>MAHLLKTVVAGCSCPFLSNLGSSKVLPGKRDFVRTLRTHQALWCKSPVKPGIPYKQLTVGVPKEIFQNEKRVALSPAGVQALVKQGFNVVVESGAGEASKFPDDLYRAAGAQIQGMKEVLASDLVVKVRAPMVNPTLGAHEADFLKPSGTLISFIYPAQNPDLLNKLSERKTTVLAMDQVPRVTIAQGYDALSSMANISGYKAVVLAANHFGRFFTGQITAAGKVPPAKILIVGGGVAGLASAGAAKSMGAVVRGFDTRAAALEQFKSLGAEPLEVDLKESGEGQGGYAKEMSKEFIEAEMKLFAQQCKEVDILISTALIPGKKAPVLFSKEMIESMKEGSVVVDLAAEAGGNFETTKPGELYVHKGITHIGYTDLPSRMATQASTLYSNNITKLLKAISPDKDNFHFEVKDDFDFGTMSHVIRGTVVMKDGKVIFPAPTPKNIPEEAPVKPKTVAELEAEKAGTVSMYTKTLTTASVYSAGLTGMLGLGIVAPNVAFSQMVTTFGLAGIIGYHTVWGVTPALHSPLMSVTNAISGLTAVGGLALMGGHFYPSTTSQSLAALATFISSVNIAGGFLVTQRMLDMFKRPTDPPEYNYLYLLPGGTFVGGYLAALYGGYNIEEIMYLGSGLCCVGALGGLSTQGTARLGNALGMIGVAGGLAATLGGLKPDPQLLAQMSGAMAMGGTIGLTIAKRIQISDLPQLVAAFHSLVGLAAVLTCMAEYIVEYPHFAMDATSNFTKIVAYLGTYIGGVTFSGSLVAYGKLQGILKSAPLLLPGRHALNAGLLAASVGGIIPFMADPSFTTGITCLGSVSGLSTLMGVTLTAAIGGADMPVVITVLNSYSGWALCAEGFLLNNNLLTIVGALIGSSGAILSYIMCVAMNRSLANVILGGYGTTSTAGGKPMEISGTHTEINLDNAVEMIREANSIVITPGYGLCAAKAQYPIADLVKMLTEQGKKVRFGIHPVAGRMPGQLNVLLAEAGVPYDIVLEMDEINSDFPDTDLVLVIGANDTVNSAAQEDPNSIIAGMPVLEVWKSKQVIVMKRSLGVGYAAVDNPIFYKPNTAMLLGDAKKTCDALQAKVRESYQK</sequence>
<keyword id="KW-0007">Acetylation</keyword>
<keyword id="KW-0903">Direct protein sequencing</keyword>
<keyword id="KW-0472">Membrane</keyword>
<keyword id="KW-0496">Mitochondrion</keyword>
<keyword id="KW-0999">Mitochondrion inner membrane</keyword>
<keyword id="KW-0520">NAD</keyword>
<keyword id="KW-0521">NADP</keyword>
<keyword id="KW-1185">Reference proteome</keyword>
<keyword id="KW-0809">Transit peptide</keyword>
<keyword id="KW-1278">Translocase</keyword>
<keyword id="KW-0812">Transmembrane</keyword>
<keyword id="KW-1133">Transmembrane helix</keyword>
<feature type="transit peptide" description="Mitochondrion" evidence="2">
    <location>
        <begin position="1"/>
        <end position="43"/>
    </location>
</feature>
<feature type="chain" id="PRO_0000001056" description="NAD(P) transhydrogenase, mitochondrial">
    <location>
        <begin position="44"/>
        <end position="1086"/>
    </location>
</feature>
<feature type="topological domain" description="Mitochondrial matrix" evidence="2">
    <location>
        <begin position="44"/>
        <end position="474"/>
    </location>
</feature>
<feature type="transmembrane region" description="Helical" evidence="6">
    <location>
        <begin position="475"/>
        <end position="493"/>
    </location>
</feature>
<feature type="transmembrane region" description="Helical" evidence="6">
    <location>
        <begin position="501"/>
        <end position="521"/>
    </location>
</feature>
<feature type="transmembrane region" description="Helical" evidence="6">
    <location>
        <begin position="527"/>
        <end position="546"/>
    </location>
</feature>
<feature type="transmembrane region" description="Helical" evidence="6">
    <location>
        <begin position="558"/>
        <end position="578"/>
    </location>
</feature>
<feature type="topological domain" description="Mitochondrial matrix" evidence="2">
    <location>
        <begin position="579"/>
        <end position="595"/>
    </location>
</feature>
<feature type="transmembrane region" description="Helical" evidence="6">
    <location>
        <begin position="596"/>
        <end position="616"/>
    </location>
</feature>
<feature type="transmembrane region" description="Helical" evidence="6">
    <location>
        <begin position="622"/>
        <end position="642"/>
    </location>
</feature>
<feature type="transmembrane region" description="Helical" evidence="6">
    <location>
        <begin position="646"/>
        <end position="666"/>
    </location>
</feature>
<feature type="transmembrane region" description="Helical" evidence="6">
    <location>
        <begin position="672"/>
        <end position="691"/>
    </location>
</feature>
<feature type="transmembrane region" description="Helical" evidence="6">
    <location>
        <begin position="702"/>
        <end position="722"/>
    </location>
</feature>
<feature type="topological domain" description="Cytoplasmic" evidence="2">
    <location>
        <begin position="723"/>
        <end position="739"/>
    </location>
</feature>
<feature type="transmembrane region" description="Helical" evidence="6">
    <location>
        <begin position="740"/>
        <end position="760"/>
    </location>
</feature>
<feature type="transmembrane region" description="Helical" evidence="6">
    <location>
        <begin position="778"/>
        <end position="797"/>
    </location>
</feature>
<feature type="transmembrane region" description="Helical" evidence="6">
    <location>
        <begin position="801"/>
        <end position="819"/>
    </location>
</feature>
<feature type="transmembrane region" description="Helical" evidence="6">
    <location>
        <begin position="833"/>
        <end position="853"/>
    </location>
</feature>
<feature type="transmembrane region" description="Helical" evidence="6">
    <location>
        <begin position="857"/>
        <end position="879"/>
    </location>
</feature>
<feature type="topological domain" description="Mitochondrial matrix" evidence="2">
    <location>
        <begin position="880"/>
        <end position="1086"/>
    </location>
</feature>
<feature type="binding site" evidence="1">
    <location>
        <begin position="182"/>
        <end position="184"/>
    </location>
    <ligand>
        <name>NAD(+)</name>
        <dbReference type="ChEBI" id="CHEBI:57540"/>
    </ligand>
</feature>
<feature type="binding site" evidence="1">
    <location>
        <position position="237"/>
    </location>
    <ligand>
        <name>NAD(+)</name>
        <dbReference type="ChEBI" id="CHEBI:57540"/>
    </ligand>
</feature>
<feature type="binding site" evidence="1">
    <location>
        <begin position="257"/>
        <end position="259"/>
    </location>
    <ligand>
        <name>NAD(+)</name>
        <dbReference type="ChEBI" id="CHEBI:57540"/>
    </ligand>
</feature>
<feature type="binding site" evidence="5">
    <location>
        <position position="287"/>
    </location>
    <ligand>
        <name>NAD(+)</name>
        <dbReference type="ChEBI" id="CHEBI:57540"/>
    </ligand>
</feature>
<feature type="binding site" evidence="1">
    <location>
        <position position="300"/>
    </location>
    <ligand>
        <name>NAD(+)</name>
        <dbReference type="ChEBI" id="CHEBI:57540"/>
    </ligand>
</feature>
<feature type="binding site" evidence="1">
    <location>
        <position position="319"/>
    </location>
    <ligand>
        <name>NAD(+)</name>
        <dbReference type="ChEBI" id="CHEBI:57540"/>
    </ligand>
</feature>
<feature type="binding site" evidence="3">
    <location>
        <position position="933"/>
    </location>
    <ligand>
        <name>NADP(+)</name>
        <dbReference type="ChEBI" id="CHEBI:58349"/>
    </ligand>
</feature>
<feature type="binding site" evidence="3">
    <location>
        <begin position="965"/>
        <end position="970"/>
    </location>
    <ligand>
        <name>NADP(+)</name>
        <dbReference type="ChEBI" id="CHEBI:58349"/>
    </ligand>
</feature>
<feature type="binding site" evidence="3">
    <location>
        <begin position="1007"/>
        <end position="1011"/>
    </location>
    <ligand>
        <name>NADP(+)</name>
        <dbReference type="ChEBI" id="CHEBI:58349"/>
    </ligand>
</feature>
<feature type="binding site" evidence="3">
    <location>
        <begin position="1026"/>
        <end position="1027"/>
    </location>
    <ligand>
        <name>NADP(+)</name>
        <dbReference type="ChEBI" id="CHEBI:58349"/>
    </ligand>
</feature>
<feature type="binding site" evidence="3">
    <location>
        <begin position="1042"/>
        <end position="1049"/>
    </location>
    <ligand>
        <name>NADP(+)</name>
        <dbReference type="ChEBI" id="CHEBI:58349"/>
    </ligand>
</feature>
<feature type="binding site" evidence="3">
    <location>
        <begin position="1068"/>
        <end position="1069"/>
    </location>
    <ligand>
        <name>NADP(+)</name>
        <dbReference type="ChEBI" id="CHEBI:58349"/>
    </ligand>
</feature>
<feature type="modified residue" description="N6-acetyllysine" evidence="3">
    <location>
        <position position="70"/>
    </location>
</feature>
<feature type="modified residue" description="N6-succinyllysine" evidence="9">
    <location>
        <position position="117"/>
    </location>
</feature>
<feature type="modified residue" description="N6-succinyllysine" evidence="9">
    <location>
        <position position="224"/>
    </location>
</feature>
<feature type="modified residue" description="N6-succinyllysine" evidence="9">
    <location>
        <position position="294"/>
    </location>
</feature>
<feature type="modified residue" description="N6-succinyllysine" evidence="9">
    <location>
        <position position="331"/>
    </location>
</feature>
<feature type="modified residue" description="N6-acetyllysine" evidence="3">
    <location>
        <position position="397"/>
    </location>
</feature>
<feature type="modified residue" description="N6-succinyllysine" evidence="9">
    <location>
        <position position="1079"/>
    </location>
</feature>
<feature type="sequence conflict" description="In Ref. 1; CAA89065." evidence="8" ref="1">
    <original>T</original>
    <variation>M</variation>
    <location>
        <position position="35"/>
    </location>
</feature>
<feature type="sequence conflict" description="In Ref. 1; CAA89065." evidence="8" ref="1">
    <original>P</original>
    <variation>L</variation>
    <location>
        <position position="775"/>
    </location>
</feature>
<feature type="sequence conflict" description="In Ref. 1; CAA89065." evidence="8" ref="1">
    <original>G</original>
    <variation>A</variation>
    <location>
        <position position="813"/>
    </location>
</feature>
<reference key="1">
    <citation type="journal article" date="1996" name="Biochim. Biophys. Acta">
        <title>The cDNA sequence of proton-pumping nicotinamide nucleotide transhydrogenase from man and mouse.</title>
        <authorList>
            <person name="Lagberg E.M."/>
            <person name="Betsholtz C."/>
            <person name="Rydstrom J."/>
        </authorList>
    </citation>
    <scope>NUCLEOTIDE SEQUENCE [MRNA]</scope>
    <source>
        <strain>C57BL/6 X CBA</strain>
        <tissue>Liver</tissue>
    </source>
</reference>
<reference key="2">
    <citation type="journal article" date="2001" name="Biochim. Biophys. Acta">
        <title>Characterization of a nicotinamide nucleotide transhydrogenase gene from the green alga Acetabularia acetabulum and comparison of its structure with those of the corresponding genes in mouse and Caenorhabditis elegans.</title>
        <authorList>
            <person name="Arkblad E.L."/>
            <person name="Betsholtz C."/>
            <person name="Mandoli D."/>
            <person name="Rydstrom J."/>
        </authorList>
    </citation>
    <scope>NUCLEOTIDE SEQUENCE [GENOMIC DNA]</scope>
    <source>
        <strain>129/SvJ</strain>
    </source>
</reference>
<reference key="3">
    <citation type="submission" date="2007-04" db="UniProtKB">
        <authorList>
            <person name="Lubec G."/>
            <person name="Kang S.U."/>
        </authorList>
    </citation>
    <scope>PROTEIN SEQUENCE OF 72-84; 214-224; 268-279; 367-379; 434-442; 769-777 AND 940-949</scope>
    <scope>IDENTIFICATION BY MASS SPECTROMETRY</scope>
    <source>
        <strain>C57BL/6J</strain>
        <tissue>Brain</tissue>
    </source>
</reference>
<reference key="4">
    <citation type="journal article" date="2010" name="Cell">
        <title>A tissue-specific atlas of mouse protein phosphorylation and expression.</title>
        <authorList>
            <person name="Huttlin E.L."/>
            <person name="Jedrychowski M.P."/>
            <person name="Elias J.E."/>
            <person name="Goswami T."/>
            <person name="Rad R."/>
            <person name="Beausoleil S.A."/>
            <person name="Villen J."/>
            <person name="Haas W."/>
            <person name="Sowa M.E."/>
            <person name="Gygi S.P."/>
        </authorList>
    </citation>
    <scope>IDENTIFICATION BY MASS SPECTROMETRY [LARGE SCALE ANALYSIS]</scope>
    <source>
        <tissue>Brown adipose tissue</tissue>
        <tissue>Heart</tissue>
        <tissue>Kidney</tissue>
        <tissue>Liver</tissue>
        <tissue>Lung</tissue>
        <tissue>Pancreas</tissue>
        <tissue>Spleen</tissue>
        <tissue>Testis</tissue>
    </source>
</reference>
<reference key="5">
    <citation type="journal article" date="2012" name="Nat. Genet.">
        <title>Mutations in NNT encoding nicotinamide nucleotide transhydrogenase cause familial glucocorticoid deficiency.</title>
        <authorList>
            <person name="Meimaridou E."/>
            <person name="Kowalczyk J."/>
            <person name="Guasti L."/>
            <person name="Hughes C.R."/>
            <person name="Wagner F."/>
            <person name="Frommolt P."/>
            <person name="Nurnberg P."/>
            <person name="Mann N.P."/>
            <person name="Banerjee R."/>
            <person name="Saka H.N."/>
            <person name="Chapple J.P."/>
            <person name="King P.J."/>
            <person name="Clark A.J."/>
            <person name="Metherell L.A."/>
        </authorList>
    </citation>
    <scope>DISRUPTION PHENOTYPE</scope>
    <scope>TISSUE SPECIFICITY</scope>
</reference>
<reference key="6">
    <citation type="journal article" date="2013" name="Mol. Cell">
        <title>SIRT5-mediated lysine desuccinylation impacts diverse metabolic pathways.</title>
        <authorList>
            <person name="Park J."/>
            <person name="Chen Y."/>
            <person name="Tishkoff D.X."/>
            <person name="Peng C."/>
            <person name="Tan M."/>
            <person name="Dai L."/>
            <person name="Xie Z."/>
            <person name="Zhang Y."/>
            <person name="Zwaans B.M."/>
            <person name="Skinner M.E."/>
            <person name="Lombard D.B."/>
            <person name="Zhao Y."/>
        </authorList>
    </citation>
    <scope>SUCCINYLATION [LARGE SCALE ANALYSIS] AT LYS-117; LYS-224; LYS-294; LYS-331 AND LYS-1079</scope>
    <scope>IDENTIFICATION BY MASS SPECTROMETRY [LARGE SCALE ANALYSIS]</scope>
    <source>
        <tissue>Liver</tissue>
    </source>
</reference>
<protein>
    <recommendedName>
        <fullName>NAD(P) transhydrogenase, mitochondrial</fullName>
        <ecNumber evidence="4">7.1.1.1</ecNumber>
    </recommendedName>
    <alternativeName>
        <fullName>Nicotinamide nucleotide transhydrogenase</fullName>
    </alternativeName>
    <alternativeName>
        <fullName>Pyridine nucleotide transhydrogenase</fullName>
    </alternativeName>
</protein>
<proteinExistence type="evidence at protein level"/>
<name>NNTM_MOUSE</name>
<accession>Q61941</accession>
<accession>Q9JK70</accession>
<gene>
    <name type="primary">Nnt</name>
</gene>
<comment type="function">
    <text evidence="1 3">The transhydrogenation between NADH and NADP is coupled to respiration and ATP hydrolysis and functions as a proton pump across the membrane (By similarity). May play a role in reactive oxygen species (ROS) detoxification in the adrenal gland (By similarity).</text>
</comment>
<comment type="catalytic activity">
    <reaction evidence="4">
        <text>NAD(+) + NADPH + H(+)(in) = NADH + NADP(+) + H(+)(out)</text>
        <dbReference type="Rhea" id="RHEA:47992"/>
        <dbReference type="ChEBI" id="CHEBI:15378"/>
        <dbReference type="ChEBI" id="CHEBI:57540"/>
        <dbReference type="ChEBI" id="CHEBI:57783"/>
        <dbReference type="ChEBI" id="CHEBI:57945"/>
        <dbReference type="ChEBI" id="CHEBI:58349"/>
        <dbReference type="EC" id="7.1.1.1"/>
    </reaction>
</comment>
<comment type="subunit">
    <text evidence="2">Homodimer.</text>
</comment>
<comment type="subcellular location">
    <subcellularLocation>
        <location evidence="8">Mitochondrion inner membrane</location>
        <topology evidence="8">Multi-pass membrane protein</topology>
        <orientation evidence="8">Matrix side</orientation>
    </subcellularLocation>
</comment>
<comment type="tissue specificity">
    <text evidence="7">Widely expressed with expression most readily detectable in adrenal, heart, kidney, thyroid and adipose tissues.</text>
</comment>
<comment type="disruption phenotype">
    <text evidence="7">Higher levels of adrenocortical cell apoptosis and impaired glucocorticoid production are observed.</text>
</comment>
<comment type="similarity">
    <text evidence="8">In the N-terminal section; belongs to the AlaDH/PNT family.</text>
</comment>
<comment type="similarity">
    <text evidence="8">In the C-terminal section; belongs to the PNT beta subunit family.</text>
</comment>
<evidence type="ECO:0000250" key="1">
    <source>
        <dbReference type="UniProtKB" id="P07001"/>
    </source>
</evidence>
<evidence type="ECO:0000250" key="2">
    <source>
        <dbReference type="UniProtKB" id="P11024"/>
    </source>
</evidence>
<evidence type="ECO:0000250" key="3">
    <source>
        <dbReference type="UniProtKB" id="Q13423"/>
    </source>
</evidence>
<evidence type="ECO:0000250" key="4">
    <source>
        <dbReference type="UniProtKB" id="Q2RSB2"/>
    </source>
</evidence>
<evidence type="ECO:0000250" key="5">
    <source>
        <dbReference type="UniProtKB" id="W5PFI3"/>
    </source>
</evidence>
<evidence type="ECO:0000255" key="6"/>
<evidence type="ECO:0000269" key="7">
    <source>
    </source>
</evidence>
<evidence type="ECO:0000305" key="8"/>
<evidence type="ECO:0007744" key="9">
    <source>
    </source>
</evidence>